<accession>Q6ZU67</accession>
<accession>A1A5D6</accession>
<accession>A1A5D7</accession>
<accession>C9JQZ5</accession>
<accession>Q58A26</accession>
<accession>Q58A27</accession>
<comment type="alternative products">
    <event type="alternative splicing"/>
    <isoform>
        <id>Q6ZU67-1</id>
        <name>1</name>
        <sequence type="displayed"/>
    </isoform>
    <isoform>
        <id>Q6ZU67-2</id>
        <name>2</name>
        <sequence type="described" ref="VSP_016490 VSP_016491"/>
    </isoform>
    <isoform>
        <id>Q6ZU67-3</id>
        <name>3</name>
        <sequence type="described" ref="VSP_016488 VSP_016489 VSP_016492 VSP_016493"/>
    </isoform>
    <isoform>
        <id>Q6ZU67-4</id>
        <name>4</name>
        <sequence type="described" ref="VSP_036338"/>
    </isoform>
    <isoform>
        <id>Q6ZU67-5</id>
        <name>5</name>
        <sequence type="described" ref="VSP_036338 VSP_016490 VSP_016491"/>
    </isoform>
</comment>
<comment type="sequence caution" evidence="7">
    <conflict type="erroneous initiation">
        <sequence resource="EMBL-CDS" id="AAI28593"/>
    </conflict>
    <text>Truncated N-terminus.</text>
</comment>
<comment type="sequence caution" evidence="7">
    <conflict type="erroneous initiation">
        <sequence resource="EMBL-CDS" id="AAI28594"/>
    </conflict>
    <text>Truncated N-terminus.</text>
</comment>
<comment type="sequence caution" evidence="7">
    <conflict type="erroneous initiation">
        <sequence resource="EMBL-CDS" id="BAD93191"/>
    </conflict>
    <text>Truncated N-terminus.</text>
</comment>
<comment type="sequence caution" evidence="7">
    <conflict type="erroneous initiation">
        <sequence resource="EMBL-CDS" id="BAD93192"/>
    </conflict>
    <text>Truncated N-terminus.</text>
</comment>
<organism>
    <name type="scientific">Homo sapiens</name>
    <name type="common">Human</name>
    <dbReference type="NCBI Taxonomy" id="9606"/>
    <lineage>
        <taxon>Eukaryota</taxon>
        <taxon>Metazoa</taxon>
        <taxon>Chordata</taxon>
        <taxon>Craniata</taxon>
        <taxon>Vertebrata</taxon>
        <taxon>Euteleostomi</taxon>
        <taxon>Mammalia</taxon>
        <taxon>Eutheria</taxon>
        <taxon>Euarchontoglires</taxon>
        <taxon>Primates</taxon>
        <taxon>Haplorrhini</taxon>
        <taxon>Catarrhini</taxon>
        <taxon>Hominidae</taxon>
        <taxon>Homo</taxon>
    </lineage>
</organism>
<feature type="chain" id="PRO_0000076190" description="BEN domain-containing protein 4">
    <location>
        <begin position="1"/>
        <end position="534"/>
    </location>
</feature>
<feature type="domain" description="BEN" evidence="2">
    <location>
        <begin position="390"/>
        <end position="498"/>
    </location>
</feature>
<feature type="region of interest" description="Disordered" evidence="3">
    <location>
        <begin position="1"/>
        <end position="24"/>
    </location>
</feature>
<feature type="region of interest" description="Disordered" evidence="3">
    <location>
        <begin position="48"/>
        <end position="128"/>
    </location>
</feature>
<feature type="region of interest" description="Disordered" evidence="3">
    <location>
        <begin position="287"/>
        <end position="322"/>
    </location>
</feature>
<feature type="coiled-coil region" evidence="1">
    <location>
        <begin position="324"/>
        <end position="351"/>
    </location>
</feature>
<feature type="compositionally biased region" description="Pro residues" evidence="3">
    <location>
        <begin position="53"/>
        <end position="63"/>
    </location>
</feature>
<feature type="compositionally biased region" description="Polar residues" evidence="3">
    <location>
        <begin position="69"/>
        <end position="83"/>
    </location>
</feature>
<feature type="compositionally biased region" description="Low complexity" evidence="3">
    <location>
        <begin position="91"/>
        <end position="109"/>
    </location>
</feature>
<feature type="compositionally biased region" description="Polar residues" evidence="3">
    <location>
        <begin position="295"/>
        <end position="310"/>
    </location>
</feature>
<feature type="compositionally biased region" description="Acidic residues" evidence="3">
    <location>
        <begin position="311"/>
        <end position="321"/>
    </location>
</feature>
<feature type="splice variant" id="VSP_016488" description="In isoform 3." evidence="4">
    <location>
        <begin position="1"/>
        <end position="78"/>
    </location>
</feature>
<feature type="splice variant" id="VSP_036338" description="In isoform 4 and isoform 5." evidence="5">
    <location>
        <begin position="33"/>
        <end position="157"/>
    </location>
</feature>
<feature type="splice variant" id="VSP_016489" description="In isoform 3." evidence="4">
    <original>QFQAQSSYPPGPGRA</original>
    <variation>MQGAPRARFGSRTPP</variation>
    <location>
        <begin position="79"/>
        <end position="93"/>
    </location>
</feature>
<feature type="splice variant" id="VSP_016490" description="In isoform 2 and isoform 5." evidence="5 6">
    <original>SV</original>
    <variation>IH</variation>
    <location>
        <begin position="440"/>
        <end position="441"/>
    </location>
</feature>
<feature type="splice variant" id="VSP_016491" description="In isoform 2 and isoform 5." evidence="5 6">
    <location>
        <begin position="442"/>
        <end position="534"/>
    </location>
</feature>
<feature type="splice variant" id="VSP_016492" description="In isoform 3." evidence="4">
    <original>EFIRMHCTSNPDWWMPSEEQINKVFSDAVGHA</original>
    <variation>GTASFRSVSPSVISFHRIGCGSPRTSVQPSVF</variation>
    <location>
        <begin position="463"/>
        <end position="494"/>
    </location>
</feature>
<feature type="splice variant" id="VSP_016493" description="In isoform 3." evidence="4">
    <location>
        <begin position="495"/>
        <end position="534"/>
    </location>
</feature>
<keyword id="KW-0025">Alternative splicing</keyword>
<keyword id="KW-0175">Coiled coil</keyword>
<keyword id="KW-1267">Proteomics identification</keyword>
<keyword id="KW-1185">Reference proteome</keyword>
<sequence>MEEEMQPAEEGPSVPKIYKQRSPYSVLKTFPSKRPALAKRYERPTLVELPHVRAPPPPPPPFAPHAAVSISSSEPPPQQFQAQSSYPPGPGRAAAAASSSSPSCTPATSQGHLRTPAQPPPASPAASSSSSFAAVVRYGPGAAAAAGTGGTGSDSASLELSAESRMILDAFAQQCSRVLSLLNCGGKLLDSNHSQSMISCVKQEGSSYNERQEHCHIGKGVHSQTSDNVDIEMQYMQRKQQTSAFLRVFTDSLQNYLLSGSFPTPNPSSASEYGHLADVDPLSTSPVHTLGGWTSPATSESHGHPSSSTLPEEEEEEDEEGYCPRCQELEQEVISLQQENEELRRKLESIPVPCQTVLDYLKMVLQHHNQLLIPQPADQPTEGSKQLLNNYPVYITSKQWDEAVNSSKKDGRRLLRYLIRFVFTTDELKYSCGLGKRKRSVQSGETGPERRPLDPVKVTCLREFIRMHCTSNPDWWMPSEEQINKVFSDAVGHARQGRAVGTFLHNGGSFYEGIDHQASQDEVFNKSSQDGSGD</sequence>
<name>BEND4_HUMAN</name>
<proteinExistence type="evidence at protein level"/>
<protein>
    <recommendedName>
        <fullName>BEN domain-containing protein 4</fullName>
    </recommendedName>
    <alternativeName>
        <fullName>Coiled-coil domain-containing protein 4</fullName>
    </alternativeName>
</protein>
<evidence type="ECO:0000255" key="1"/>
<evidence type="ECO:0000255" key="2">
    <source>
        <dbReference type="PROSITE-ProRule" id="PRU00784"/>
    </source>
</evidence>
<evidence type="ECO:0000256" key="3">
    <source>
        <dbReference type="SAM" id="MobiDB-lite"/>
    </source>
</evidence>
<evidence type="ECO:0000303" key="4">
    <source>
    </source>
</evidence>
<evidence type="ECO:0000303" key="5">
    <source>
    </source>
</evidence>
<evidence type="ECO:0000303" key="6">
    <source ref="1"/>
</evidence>
<evidence type="ECO:0000305" key="7"/>
<reference key="1">
    <citation type="submission" date="2003-11" db="EMBL/GenBank/DDBJ databases">
        <title>Overexpressing gene in prostate cancer.</title>
        <authorList>
            <person name="Nakagawa H."/>
            <person name="Ashida S."/>
            <person name="Nakamura Y."/>
        </authorList>
    </citation>
    <scope>NUCLEOTIDE SEQUENCE [MRNA] (ISOFORMS 1 AND 2)</scope>
    <source>
        <tissue>Prostatic carcinoma</tissue>
    </source>
</reference>
<reference key="2">
    <citation type="journal article" date="2004" name="Nat. Genet.">
        <title>Complete sequencing and characterization of 21,243 full-length human cDNAs.</title>
        <authorList>
            <person name="Ota T."/>
            <person name="Suzuki Y."/>
            <person name="Nishikawa T."/>
            <person name="Otsuki T."/>
            <person name="Sugiyama T."/>
            <person name="Irie R."/>
            <person name="Wakamatsu A."/>
            <person name="Hayashi K."/>
            <person name="Sato H."/>
            <person name="Nagai K."/>
            <person name="Kimura K."/>
            <person name="Makita H."/>
            <person name="Sekine M."/>
            <person name="Obayashi M."/>
            <person name="Nishi T."/>
            <person name="Shibahara T."/>
            <person name="Tanaka T."/>
            <person name="Ishii S."/>
            <person name="Yamamoto J."/>
            <person name="Saito K."/>
            <person name="Kawai Y."/>
            <person name="Isono Y."/>
            <person name="Nakamura Y."/>
            <person name="Nagahari K."/>
            <person name="Murakami K."/>
            <person name="Yasuda T."/>
            <person name="Iwayanagi T."/>
            <person name="Wagatsuma M."/>
            <person name="Shiratori A."/>
            <person name="Sudo H."/>
            <person name="Hosoiri T."/>
            <person name="Kaku Y."/>
            <person name="Kodaira H."/>
            <person name="Kondo H."/>
            <person name="Sugawara M."/>
            <person name="Takahashi M."/>
            <person name="Kanda K."/>
            <person name="Yokoi T."/>
            <person name="Furuya T."/>
            <person name="Kikkawa E."/>
            <person name="Omura Y."/>
            <person name="Abe K."/>
            <person name="Kamihara K."/>
            <person name="Katsuta N."/>
            <person name="Sato K."/>
            <person name="Tanikawa M."/>
            <person name="Yamazaki M."/>
            <person name="Ninomiya K."/>
            <person name="Ishibashi T."/>
            <person name="Yamashita H."/>
            <person name="Murakawa K."/>
            <person name="Fujimori K."/>
            <person name="Tanai H."/>
            <person name="Kimata M."/>
            <person name="Watanabe M."/>
            <person name="Hiraoka S."/>
            <person name="Chiba Y."/>
            <person name="Ishida S."/>
            <person name="Ono Y."/>
            <person name="Takiguchi S."/>
            <person name="Watanabe S."/>
            <person name="Yosida M."/>
            <person name="Hotuta T."/>
            <person name="Kusano J."/>
            <person name="Kanehori K."/>
            <person name="Takahashi-Fujii A."/>
            <person name="Hara H."/>
            <person name="Tanase T.-O."/>
            <person name="Nomura Y."/>
            <person name="Togiya S."/>
            <person name="Komai F."/>
            <person name="Hara R."/>
            <person name="Takeuchi K."/>
            <person name="Arita M."/>
            <person name="Imose N."/>
            <person name="Musashino K."/>
            <person name="Yuuki H."/>
            <person name="Oshima A."/>
            <person name="Sasaki N."/>
            <person name="Aotsuka S."/>
            <person name="Yoshikawa Y."/>
            <person name="Matsunawa H."/>
            <person name="Ichihara T."/>
            <person name="Shiohata N."/>
            <person name="Sano S."/>
            <person name="Moriya S."/>
            <person name="Momiyama H."/>
            <person name="Satoh N."/>
            <person name="Takami S."/>
            <person name="Terashima Y."/>
            <person name="Suzuki O."/>
            <person name="Nakagawa S."/>
            <person name="Senoh A."/>
            <person name="Mizoguchi H."/>
            <person name="Goto Y."/>
            <person name="Shimizu F."/>
            <person name="Wakebe H."/>
            <person name="Hishigaki H."/>
            <person name="Watanabe T."/>
            <person name="Sugiyama A."/>
            <person name="Takemoto M."/>
            <person name="Kawakami B."/>
            <person name="Yamazaki M."/>
            <person name="Watanabe K."/>
            <person name="Kumagai A."/>
            <person name="Itakura S."/>
            <person name="Fukuzumi Y."/>
            <person name="Fujimori Y."/>
            <person name="Komiyama M."/>
            <person name="Tashiro H."/>
            <person name="Tanigami A."/>
            <person name="Fujiwara T."/>
            <person name="Ono T."/>
            <person name="Yamada K."/>
            <person name="Fujii Y."/>
            <person name="Ozaki K."/>
            <person name="Hirao M."/>
            <person name="Ohmori Y."/>
            <person name="Kawabata A."/>
            <person name="Hikiji T."/>
            <person name="Kobatake N."/>
            <person name="Inagaki H."/>
            <person name="Ikema Y."/>
            <person name="Okamoto S."/>
            <person name="Okitani R."/>
            <person name="Kawakami T."/>
            <person name="Noguchi S."/>
            <person name="Itoh T."/>
            <person name="Shigeta K."/>
            <person name="Senba T."/>
            <person name="Matsumura K."/>
            <person name="Nakajima Y."/>
            <person name="Mizuno T."/>
            <person name="Morinaga M."/>
            <person name="Sasaki M."/>
            <person name="Togashi T."/>
            <person name="Oyama M."/>
            <person name="Hata H."/>
            <person name="Watanabe M."/>
            <person name="Komatsu T."/>
            <person name="Mizushima-Sugano J."/>
            <person name="Satoh T."/>
            <person name="Shirai Y."/>
            <person name="Takahashi Y."/>
            <person name="Nakagawa K."/>
            <person name="Okumura K."/>
            <person name="Nagase T."/>
            <person name="Nomura N."/>
            <person name="Kikuchi H."/>
            <person name="Masuho Y."/>
            <person name="Yamashita R."/>
            <person name="Nakai K."/>
            <person name="Yada T."/>
            <person name="Nakamura Y."/>
            <person name="Ohara O."/>
            <person name="Isogai T."/>
            <person name="Sugano S."/>
        </authorList>
    </citation>
    <scope>NUCLEOTIDE SEQUENCE [LARGE SCALE MRNA] (ISOFORM 3)</scope>
    <source>
        <tissue>Testis</tissue>
    </source>
</reference>
<reference key="3">
    <citation type="journal article" date="2005" name="Nature">
        <title>Generation and annotation of the DNA sequences of human chromosomes 2 and 4.</title>
        <authorList>
            <person name="Hillier L.W."/>
            <person name="Graves T.A."/>
            <person name="Fulton R.S."/>
            <person name="Fulton L.A."/>
            <person name="Pepin K.H."/>
            <person name="Minx P."/>
            <person name="Wagner-McPherson C."/>
            <person name="Layman D."/>
            <person name="Wylie K."/>
            <person name="Sekhon M."/>
            <person name="Becker M.C."/>
            <person name="Fewell G.A."/>
            <person name="Delehaunty K.D."/>
            <person name="Miner T.L."/>
            <person name="Nash W.E."/>
            <person name="Kremitzki C."/>
            <person name="Oddy L."/>
            <person name="Du H."/>
            <person name="Sun H."/>
            <person name="Bradshaw-Cordum H."/>
            <person name="Ali J."/>
            <person name="Carter J."/>
            <person name="Cordes M."/>
            <person name="Harris A."/>
            <person name="Isak A."/>
            <person name="van Brunt A."/>
            <person name="Nguyen C."/>
            <person name="Du F."/>
            <person name="Courtney L."/>
            <person name="Kalicki J."/>
            <person name="Ozersky P."/>
            <person name="Abbott S."/>
            <person name="Armstrong J."/>
            <person name="Belter E.A."/>
            <person name="Caruso L."/>
            <person name="Cedroni M."/>
            <person name="Cotton M."/>
            <person name="Davidson T."/>
            <person name="Desai A."/>
            <person name="Elliott G."/>
            <person name="Erb T."/>
            <person name="Fronick C."/>
            <person name="Gaige T."/>
            <person name="Haakenson W."/>
            <person name="Haglund K."/>
            <person name="Holmes A."/>
            <person name="Harkins R."/>
            <person name="Kim K."/>
            <person name="Kruchowski S.S."/>
            <person name="Strong C.M."/>
            <person name="Grewal N."/>
            <person name="Goyea E."/>
            <person name="Hou S."/>
            <person name="Levy A."/>
            <person name="Martinka S."/>
            <person name="Mead K."/>
            <person name="McLellan M.D."/>
            <person name="Meyer R."/>
            <person name="Randall-Maher J."/>
            <person name="Tomlinson C."/>
            <person name="Dauphin-Kohlberg S."/>
            <person name="Kozlowicz-Reilly A."/>
            <person name="Shah N."/>
            <person name="Swearengen-Shahid S."/>
            <person name="Snider J."/>
            <person name="Strong J.T."/>
            <person name="Thompson J."/>
            <person name="Yoakum M."/>
            <person name="Leonard S."/>
            <person name="Pearman C."/>
            <person name="Trani L."/>
            <person name="Radionenko M."/>
            <person name="Waligorski J.E."/>
            <person name="Wang C."/>
            <person name="Rock S.M."/>
            <person name="Tin-Wollam A.-M."/>
            <person name="Maupin R."/>
            <person name="Latreille P."/>
            <person name="Wendl M.C."/>
            <person name="Yang S.-P."/>
            <person name="Pohl C."/>
            <person name="Wallis J.W."/>
            <person name="Spieth J."/>
            <person name="Bieri T.A."/>
            <person name="Berkowicz N."/>
            <person name="Nelson J.O."/>
            <person name="Osborne J."/>
            <person name="Ding L."/>
            <person name="Meyer R."/>
            <person name="Sabo A."/>
            <person name="Shotland Y."/>
            <person name="Sinha P."/>
            <person name="Wohldmann P.E."/>
            <person name="Cook L.L."/>
            <person name="Hickenbotham M.T."/>
            <person name="Eldred J."/>
            <person name="Williams D."/>
            <person name="Jones T.A."/>
            <person name="She X."/>
            <person name="Ciccarelli F.D."/>
            <person name="Izaurralde E."/>
            <person name="Taylor J."/>
            <person name="Schmutz J."/>
            <person name="Myers R.M."/>
            <person name="Cox D.R."/>
            <person name="Huang X."/>
            <person name="McPherson J.D."/>
            <person name="Mardis E.R."/>
            <person name="Clifton S.W."/>
            <person name="Warren W.C."/>
            <person name="Chinwalla A.T."/>
            <person name="Eddy S.R."/>
            <person name="Marra M.A."/>
            <person name="Ovcharenko I."/>
            <person name="Furey T.S."/>
            <person name="Miller W."/>
            <person name="Eichler E.E."/>
            <person name="Bork P."/>
            <person name="Suyama M."/>
            <person name="Torrents D."/>
            <person name="Waterston R.H."/>
            <person name="Wilson R.K."/>
        </authorList>
    </citation>
    <scope>NUCLEOTIDE SEQUENCE [LARGE SCALE GENOMIC DNA]</scope>
</reference>
<reference key="4">
    <citation type="journal article" date="2004" name="Genome Res.">
        <title>The status, quality, and expansion of the NIH full-length cDNA project: the Mammalian Gene Collection (MGC).</title>
        <authorList>
            <consortium name="The MGC Project Team"/>
        </authorList>
    </citation>
    <scope>NUCLEOTIDE SEQUENCE [LARGE SCALE MRNA] (ISOFORMS 4 AND 5)</scope>
</reference>
<dbReference type="EMBL" id="AB126828">
    <property type="protein sequence ID" value="BAD93191.1"/>
    <property type="status" value="ALT_INIT"/>
    <property type="molecule type" value="mRNA"/>
</dbReference>
<dbReference type="EMBL" id="AB126829">
    <property type="protein sequence ID" value="BAD93192.1"/>
    <property type="status" value="ALT_INIT"/>
    <property type="molecule type" value="mRNA"/>
</dbReference>
<dbReference type="EMBL" id="AK125953">
    <property type="protein sequence ID" value="BAC86359.1"/>
    <property type="molecule type" value="mRNA"/>
</dbReference>
<dbReference type="EMBL" id="AC111006">
    <property type="status" value="NOT_ANNOTATED_CDS"/>
    <property type="molecule type" value="Genomic_DNA"/>
</dbReference>
<dbReference type="EMBL" id="BC128592">
    <property type="protein sequence ID" value="AAI28593.1"/>
    <property type="status" value="ALT_INIT"/>
    <property type="molecule type" value="mRNA"/>
</dbReference>
<dbReference type="EMBL" id="BC128593">
    <property type="protein sequence ID" value="AAI28594.1"/>
    <property type="status" value="ALT_INIT"/>
    <property type="molecule type" value="mRNA"/>
</dbReference>
<dbReference type="CCDS" id="CCDS47048.1">
    <molecule id="Q6ZU67-1"/>
</dbReference>
<dbReference type="RefSeq" id="NP_001153019.1">
    <molecule id="Q6ZU67-2"/>
    <property type="nucleotide sequence ID" value="NM_001159547.2"/>
</dbReference>
<dbReference type="RefSeq" id="NP_997289.2">
    <molecule id="Q6ZU67-1"/>
    <property type="nucleotide sequence ID" value="NM_207406.4"/>
</dbReference>
<dbReference type="RefSeq" id="XP_016863674.1">
    <molecule id="Q6ZU67-1"/>
    <property type="nucleotide sequence ID" value="XM_017008185.2"/>
</dbReference>
<dbReference type="RefSeq" id="XP_054205947.1">
    <molecule id="Q6ZU67-1"/>
    <property type="nucleotide sequence ID" value="XM_054349972.1"/>
</dbReference>
<dbReference type="SMR" id="Q6ZU67"/>
<dbReference type="BioGRID" id="133036">
    <property type="interactions" value="2"/>
</dbReference>
<dbReference type="FunCoup" id="Q6ZU67">
    <property type="interactions" value="26"/>
</dbReference>
<dbReference type="IntAct" id="Q6ZU67">
    <property type="interactions" value="2"/>
</dbReference>
<dbReference type="MINT" id="Q6ZU67"/>
<dbReference type="STRING" id="9606.ENSP00000421169"/>
<dbReference type="GlyGen" id="Q6ZU67">
    <property type="glycosylation" value="1 site, 1 O-linked glycan (1 site)"/>
</dbReference>
<dbReference type="iPTMnet" id="Q6ZU67"/>
<dbReference type="PhosphoSitePlus" id="Q6ZU67"/>
<dbReference type="BioMuta" id="BEND4"/>
<dbReference type="DMDM" id="327478588"/>
<dbReference type="MassIVE" id="Q6ZU67"/>
<dbReference type="PaxDb" id="9606-ENSP00000421169"/>
<dbReference type="PeptideAtlas" id="Q6ZU67"/>
<dbReference type="ProteomicsDB" id="68315">
    <molecule id="Q6ZU67-1"/>
</dbReference>
<dbReference type="ProteomicsDB" id="68316">
    <molecule id="Q6ZU67-2"/>
</dbReference>
<dbReference type="ProteomicsDB" id="68317">
    <molecule id="Q6ZU67-3"/>
</dbReference>
<dbReference type="ProteomicsDB" id="68318">
    <molecule id="Q6ZU67-4"/>
</dbReference>
<dbReference type="ProteomicsDB" id="68319">
    <molecule id="Q6ZU67-5"/>
</dbReference>
<dbReference type="Antibodypedia" id="23689">
    <property type="antibodies" value="123 antibodies from 26 providers"/>
</dbReference>
<dbReference type="DNASU" id="389206"/>
<dbReference type="Ensembl" id="ENST00000502486.6">
    <molecule id="Q6ZU67-1"/>
    <property type="protein sequence ID" value="ENSP00000421169.1"/>
    <property type="gene ID" value="ENSG00000188848.17"/>
</dbReference>
<dbReference type="GeneID" id="389206"/>
<dbReference type="KEGG" id="hsa:389206"/>
<dbReference type="MANE-Select" id="ENST00000502486.6">
    <property type="protein sequence ID" value="ENSP00000421169.1"/>
    <property type="RefSeq nucleotide sequence ID" value="NM_207406.4"/>
    <property type="RefSeq protein sequence ID" value="NP_997289.2"/>
</dbReference>
<dbReference type="UCSC" id="uc003gwn.4">
    <molecule id="Q6ZU67-1"/>
    <property type="organism name" value="human"/>
</dbReference>
<dbReference type="AGR" id="HGNC:23815"/>
<dbReference type="CTD" id="389206"/>
<dbReference type="DisGeNET" id="389206"/>
<dbReference type="GeneCards" id="BEND4"/>
<dbReference type="HGNC" id="HGNC:23815">
    <property type="gene designation" value="BEND4"/>
</dbReference>
<dbReference type="HPA" id="ENSG00000188848">
    <property type="expression patterns" value="Tissue enhanced (prostate, testis)"/>
</dbReference>
<dbReference type="neXtProt" id="NX_Q6ZU67"/>
<dbReference type="OpenTargets" id="ENSG00000188848"/>
<dbReference type="PharmGKB" id="PA164716541"/>
<dbReference type="VEuPathDB" id="HostDB:ENSG00000188848"/>
<dbReference type="eggNOG" id="ENOG502QUMQ">
    <property type="taxonomic scope" value="Eukaryota"/>
</dbReference>
<dbReference type="GeneTree" id="ENSGT00390000014963"/>
<dbReference type="InParanoid" id="Q6ZU67"/>
<dbReference type="OMA" id="CLRFIRM"/>
<dbReference type="OrthoDB" id="8803347at2759"/>
<dbReference type="PAN-GO" id="Q6ZU67">
    <property type="GO annotations" value="0 GO annotations based on evolutionary models"/>
</dbReference>
<dbReference type="PhylomeDB" id="Q6ZU67"/>
<dbReference type="TreeFam" id="TF332060"/>
<dbReference type="PathwayCommons" id="Q6ZU67"/>
<dbReference type="SignaLink" id="Q6ZU67"/>
<dbReference type="BioGRID-ORCS" id="389206">
    <property type="hits" value="8 hits in 1140 CRISPR screens"/>
</dbReference>
<dbReference type="ChiTaRS" id="BEND4">
    <property type="organism name" value="human"/>
</dbReference>
<dbReference type="GenomeRNAi" id="389206"/>
<dbReference type="Pharos" id="Q6ZU67">
    <property type="development level" value="Tdark"/>
</dbReference>
<dbReference type="PRO" id="PR:Q6ZU67"/>
<dbReference type="Proteomes" id="UP000005640">
    <property type="component" value="Chromosome 4"/>
</dbReference>
<dbReference type="RNAct" id="Q6ZU67">
    <property type="molecule type" value="protein"/>
</dbReference>
<dbReference type="Bgee" id="ENSG00000188848">
    <property type="expression patterns" value="Expressed in male germ line stem cell (sensu Vertebrata) in testis and 65 other cell types or tissues"/>
</dbReference>
<dbReference type="ExpressionAtlas" id="Q6ZU67">
    <property type="expression patterns" value="baseline and differential"/>
</dbReference>
<dbReference type="GO" id="GO:0003677">
    <property type="term" value="F:DNA binding"/>
    <property type="evidence" value="ECO:0007669"/>
    <property type="project" value="InterPro"/>
</dbReference>
<dbReference type="InterPro" id="IPR018379">
    <property type="entry name" value="BEN_domain"/>
</dbReference>
<dbReference type="InterPro" id="IPR038950">
    <property type="entry name" value="BEND4"/>
</dbReference>
<dbReference type="PANTHER" id="PTHR35082">
    <property type="entry name" value="BEN DOMAIN-CONTAINING PROTEIN 4"/>
    <property type="match status" value="1"/>
</dbReference>
<dbReference type="PANTHER" id="PTHR35082:SF1">
    <property type="entry name" value="BEN DOMAIN-CONTAINING PROTEIN 4"/>
    <property type="match status" value="1"/>
</dbReference>
<dbReference type="Pfam" id="PF10523">
    <property type="entry name" value="BEN"/>
    <property type="match status" value="1"/>
</dbReference>
<dbReference type="SMART" id="SM01025">
    <property type="entry name" value="BEN"/>
    <property type="match status" value="1"/>
</dbReference>
<dbReference type="PROSITE" id="PS51457">
    <property type="entry name" value="BEN"/>
    <property type="match status" value="1"/>
</dbReference>
<gene>
    <name type="primary">BEND4</name>
    <name type="synonym">CCDC4</name>
</gene>